<keyword id="KW-0131">Cell cycle</keyword>
<keyword id="KW-0132">Cell division</keyword>
<keyword id="KW-0997">Cell inner membrane</keyword>
<keyword id="KW-1003">Cell membrane</keyword>
<keyword id="KW-0472">Membrane</keyword>
<keyword id="KW-0812">Transmembrane</keyword>
<keyword id="KW-1133">Transmembrane helix</keyword>
<feature type="chain" id="PRO_0000079780" description="Cell division protein DamX">
    <location>
        <begin position="1" status="less than"/>
        <end position="214"/>
    </location>
</feature>
<feature type="transmembrane region" description="Helical" evidence="2">
    <location>
        <begin position="44"/>
        <end position="65"/>
    </location>
</feature>
<feature type="domain" description="SPOR" evidence="4">
    <location>
        <begin position="127"/>
        <end position="204"/>
    </location>
</feature>
<feature type="region of interest" description="Disordered" evidence="3">
    <location>
        <begin position="1"/>
        <end position="133"/>
    </location>
</feature>
<feature type="compositionally biased region" description="Polar residues" evidence="3">
    <location>
        <begin position="1"/>
        <end position="14"/>
    </location>
</feature>
<feature type="compositionally biased region" description="Polar residues" evidence="3">
    <location>
        <begin position="43"/>
        <end position="53"/>
    </location>
</feature>
<feature type="compositionally biased region" description="Low complexity" evidence="3">
    <location>
        <begin position="78"/>
        <end position="97"/>
    </location>
</feature>
<feature type="compositionally biased region" description="Low complexity" evidence="3">
    <location>
        <begin position="110"/>
        <end position="131"/>
    </location>
</feature>
<feature type="non-terminal residue">
    <location>
        <position position="1"/>
    </location>
</feature>
<sequence>GSGTPTEAQTQPQQGGAHERVDLPGNMADALSQQQGQVDAATQGMTGAASTLPTAPATVMSGAAAREATRPVQGTAPQQHKTPAKTAAAKPTATQHKSPTTVYTPPAKPSSTAKAGAVASSGSSVQSAPGSHYTLQLSSASRSDTLNAYAKQQKLQNYLVYATKRDGKPWYVLVSGNYASSAEAKRAIASLPADVQAKKPWVRPVHQVQQDLKK</sequence>
<reference key="1">
    <citation type="submission" date="1994-06" db="EMBL/GenBank/DDBJ databases">
        <authorList>
            <person name="Ostendorf T."/>
            <person name="Cherepanov P."/>
            <person name="Jekel M."/>
            <person name="de Vries J."/>
            <person name="Wackernagel W."/>
        </authorList>
    </citation>
    <scope>NUCLEOTIDE SEQUENCE [GENOMIC DNA]</scope>
    <source>
        <strain>Sr41</strain>
    </source>
</reference>
<protein>
    <recommendedName>
        <fullName evidence="1">Cell division protein DamX</fullName>
    </recommendedName>
</protein>
<organism>
    <name type="scientific">Serratia marcescens</name>
    <dbReference type="NCBI Taxonomy" id="615"/>
    <lineage>
        <taxon>Bacteria</taxon>
        <taxon>Pseudomonadati</taxon>
        <taxon>Pseudomonadota</taxon>
        <taxon>Gammaproteobacteria</taxon>
        <taxon>Enterobacterales</taxon>
        <taxon>Yersiniaceae</taxon>
        <taxon>Serratia</taxon>
    </lineage>
</organism>
<name>DAMX_SERMA</name>
<proteinExistence type="inferred from homology"/>
<dbReference type="EMBL" id="X78412">
    <property type="protein sequence ID" value="CAA55176.1"/>
    <property type="molecule type" value="Genomic_DNA"/>
</dbReference>
<dbReference type="PIR" id="S47098">
    <property type="entry name" value="S47098"/>
</dbReference>
<dbReference type="SMR" id="P45459"/>
<dbReference type="STRING" id="273526.SMDB11_3849"/>
<dbReference type="GO" id="GO:0005886">
    <property type="term" value="C:plasma membrane"/>
    <property type="evidence" value="ECO:0007669"/>
    <property type="project" value="UniProtKB-SubCell"/>
</dbReference>
<dbReference type="GO" id="GO:0042834">
    <property type="term" value="F:peptidoglycan binding"/>
    <property type="evidence" value="ECO:0007669"/>
    <property type="project" value="InterPro"/>
</dbReference>
<dbReference type="GO" id="GO:0051301">
    <property type="term" value="P:cell division"/>
    <property type="evidence" value="ECO:0007669"/>
    <property type="project" value="UniProtKB-KW"/>
</dbReference>
<dbReference type="Gene3D" id="3.30.70.1070">
    <property type="entry name" value="Sporulation related repeat"/>
    <property type="match status" value="1"/>
</dbReference>
<dbReference type="InterPro" id="IPR007730">
    <property type="entry name" value="SPOR-like_dom"/>
</dbReference>
<dbReference type="InterPro" id="IPR036680">
    <property type="entry name" value="SPOR-like_sf"/>
</dbReference>
<dbReference type="Pfam" id="PF05036">
    <property type="entry name" value="SPOR"/>
    <property type="match status" value="1"/>
</dbReference>
<dbReference type="SUPFAM" id="SSF110997">
    <property type="entry name" value="Sporulation related repeat"/>
    <property type="match status" value="1"/>
</dbReference>
<dbReference type="PROSITE" id="PS51724">
    <property type="entry name" value="SPOR"/>
    <property type="match status" value="1"/>
</dbReference>
<accession>P45459</accession>
<gene>
    <name evidence="1" type="primary">damX</name>
</gene>
<evidence type="ECO:0000250" key="1">
    <source>
        <dbReference type="UniProtKB" id="P11557"/>
    </source>
</evidence>
<evidence type="ECO:0000255" key="2"/>
<evidence type="ECO:0000256" key="3">
    <source>
        <dbReference type="SAM" id="MobiDB-lite"/>
    </source>
</evidence>
<evidence type="ECO:0000305" key="4"/>
<comment type="function">
    <text evidence="1">Non-essential cell division protein.</text>
</comment>
<comment type="subcellular location">
    <subcellularLocation>
        <location evidence="1">Cell inner membrane</location>
        <topology evidence="2">Single-pass membrane protein</topology>
    </subcellularLocation>
    <text evidence="1">Localizes at the septal ring.</text>
</comment>
<comment type="domain">
    <text evidence="1">The SPOR domain binds septal peptidoglycans and is required to target DamX to the septal ring.</text>
</comment>
<comment type="similarity">
    <text evidence="4">Belongs to the DamX family.</text>
</comment>